<feature type="chain" id="PRO_0000223687" description="RNA-directed RNA polymerase">
    <location>
        <begin position="1"/>
        <end position="1045"/>
    </location>
</feature>
<feature type="domain" description="RdRp catalytic">
    <location>
        <begin position="593"/>
        <end position="718"/>
    </location>
</feature>
<feature type="region of interest" description="Disordered" evidence="1">
    <location>
        <begin position="916"/>
        <end position="1045"/>
    </location>
</feature>
<feature type="compositionally biased region" description="Polar residues" evidence="1">
    <location>
        <begin position="1033"/>
        <end position="1045"/>
    </location>
</feature>
<evidence type="ECO:0000256" key="1">
    <source>
        <dbReference type="SAM" id="MobiDB-lite"/>
    </source>
</evidence>
<evidence type="ECO:0000305" key="2"/>
<name>RDRP_MRNV</name>
<reference key="1">
    <citation type="submission" date="2003-01" db="EMBL/GenBank/DDBJ databases">
        <title>Nucleotide sequence of the MrNV-RNA-1 of Macrobrachium rosenbergii.</title>
        <authorList>
            <person name="Bonami J.-R."/>
            <person name="Sri Widada J."/>
            <person name="Richard V.R."/>
            <person name="Vincent A."/>
            <person name="Durand S.P."/>
        </authorList>
    </citation>
    <scope>NUCLEOTIDE SEQUENCE [GENOMIC DNA]</scope>
</reference>
<keyword id="KW-0548">Nucleotidyltransferase</keyword>
<keyword id="KW-0696">RNA-directed RNA polymerase</keyword>
<keyword id="KW-0808">Transferase</keyword>
<keyword id="KW-0693">Viral RNA replication</keyword>
<organism>
    <name type="scientific">Macrobrachium rosenbergii nodavirus</name>
    <name type="common">MrNV</name>
    <dbReference type="NCBI Taxonomy" id="222557"/>
    <lineage>
        <taxon>Viruses</taxon>
        <taxon>Riboviria</taxon>
        <taxon>Orthornavirae</taxon>
        <taxon>Kitrinoviricota</taxon>
        <taxon>Magsaviricetes</taxon>
        <taxon>Nodamuvirales</taxon>
        <taxon>Nodaviridae</taxon>
    </lineage>
</organism>
<protein>
    <recommendedName>
        <fullName>RNA-directed RNA polymerase</fullName>
        <shortName>RdRp</shortName>
        <ecNumber>2.7.7.48</ecNumber>
    </recommendedName>
    <alternativeName>
        <fullName>RNA replicase</fullName>
    </alternativeName>
</protein>
<accession>Q6XNL5</accession>
<comment type="function">
    <text evidence="2">RNA-dependent RNA polymerase which replicates the viral genome composed of 2 RNA segments, RNA1 and RNA2.</text>
</comment>
<comment type="catalytic activity">
    <reaction>
        <text>RNA(n) + a ribonucleoside 5'-triphosphate = RNA(n+1) + diphosphate</text>
        <dbReference type="Rhea" id="RHEA:21248"/>
        <dbReference type="Rhea" id="RHEA-COMP:14527"/>
        <dbReference type="Rhea" id="RHEA-COMP:17342"/>
        <dbReference type="ChEBI" id="CHEBI:33019"/>
        <dbReference type="ChEBI" id="CHEBI:61557"/>
        <dbReference type="ChEBI" id="CHEBI:140395"/>
        <dbReference type="EC" id="2.7.7.48"/>
    </reaction>
</comment>
<comment type="similarity">
    <text evidence="2">Belongs to the nodaviridae RNA polymerase family.</text>
</comment>
<proteinExistence type="inferred from homology"/>
<sequence>MKCNNLLYGVELPMCLQSSMGMVVVTGLAIVYLVIYILIYSFTHGPRLSRRLASYVVIGPYEAIAKSRPAMALQRAMVDLTRRDVRTDWYPLNNLLMNKPHRLSENGHKTSGAVRDAARNLITSAITSLGMDKYEISPGGHTVDEQLASHRHYAVNDLHRASADDAVKENAVIVAIDTDYYLRDPSIYFSNNNPFILHTFQPITVAGKDGDVRFTISDNQVDYRVDGGGRWQHKVWNWCDYGEFLYLKNILGILSINWWLSFFGIRKVIYQKIQHARPWVDCPNRALVWGLPQFTRYMITWLPIEMNARELSRVNYQCASRPGWNCLVDHTSTKLVASIGREGNDCHVELAKEDLDVVLGLSTMQSVTSRLLQMGYKQPQTLATVCQFYNSAAYDILSCSIVARPSQPPVHWPLASEIDQPTTSFRNYSNNIVTCGNLCPQLKRWEVLSNSLEHRVTMVANNKVPTPRIARFAEEYVRLVVPEANVGVPYSLEDARKELDKPTQVNAVNQIWETVDMEVRRLIEAFVKNEPTNKSGRIISSFADSRFLLKFSTYTLAFRDEVLHAEHNRHWFCPGLTPNEIADKVCDYVRGVATPAEGDFSNFDGRVSAWCQENVMNAVYHRWFNRKFSKELQKYTSMLVSCPARAKRFGFQYEPGVGVKSGSPTTCDLNSVLNNFTQYAAVRLTKPDLSPQEAFEQTGLSFGDDSLFDKQYQLRWNYVVEQLGMELKVEPFDPSNGVTFLARVFPDPYSTNTSFQDPLRTWRKLNMTSRTCVPVESAALDRVSGYLVTDKYSPVTSEYCHMIERCYMNTAESVTRRRQRKDCDREKPYWLVSGGAWPQREGDYELMMRVTAARTGFEESKLINLISQFQSVHDPWDIKPLDYQEPSPYKDTLDIDGQPVDAVDERQYQNERNTVNLRAGAAISQMPVPSVPGGEDCNRQSADMPGPKSSEGSEQLQGLPEQDGSNRLQCHRQPTFKAKGGSNTKGRSRKSRNGGRSISSKTANPTTHEVGGGNGKTRVTIAKRSGPKRPHNVVSNAWETLNDNR</sequence>
<dbReference type="EC" id="2.7.7.48"/>
<dbReference type="EMBL" id="AY222839">
    <property type="protein sequence ID" value="AAO60068.1"/>
    <property type="molecule type" value="Genomic_RNA"/>
</dbReference>
<dbReference type="RefSeq" id="NP_919036.1">
    <property type="nucleotide sequence ID" value="NC_005094.1"/>
</dbReference>
<dbReference type="SMR" id="Q6XNL5"/>
<dbReference type="GeneID" id="2943295"/>
<dbReference type="KEGG" id="vg:2943295"/>
<dbReference type="OrthoDB" id="155at10239"/>
<dbReference type="Proteomes" id="UP000203150">
    <property type="component" value="Genome"/>
</dbReference>
<dbReference type="GO" id="GO:0003723">
    <property type="term" value="F:RNA binding"/>
    <property type="evidence" value="ECO:0007669"/>
    <property type="project" value="InterPro"/>
</dbReference>
<dbReference type="GO" id="GO:0003968">
    <property type="term" value="F:RNA-directed RNA polymerase activity"/>
    <property type="evidence" value="ECO:0007669"/>
    <property type="project" value="UniProtKB-KW"/>
</dbReference>
<dbReference type="GO" id="GO:0006351">
    <property type="term" value="P:DNA-templated transcription"/>
    <property type="evidence" value="ECO:0007669"/>
    <property type="project" value="InterPro"/>
</dbReference>
<dbReference type="CDD" id="cd23173">
    <property type="entry name" value="ps-ssRNAv_Nodaviridae_RdRp"/>
    <property type="match status" value="1"/>
</dbReference>
<dbReference type="InterPro" id="IPR043502">
    <property type="entry name" value="DNA/RNA_pol_sf"/>
</dbReference>
<dbReference type="InterPro" id="IPR043647">
    <property type="entry name" value="Noda_Vmethyltr_dom"/>
</dbReference>
<dbReference type="InterPro" id="IPR001205">
    <property type="entry name" value="RNA-dir_pol_C"/>
</dbReference>
<dbReference type="Pfam" id="PF19222">
    <property type="entry name" value="Noda_Vmethyltr"/>
    <property type="match status" value="1"/>
</dbReference>
<dbReference type="Pfam" id="PF00680">
    <property type="entry name" value="RdRP_1"/>
    <property type="match status" value="1"/>
</dbReference>
<dbReference type="SUPFAM" id="SSF56672">
    <property type="entry name" value="DNA/RNA polymerases"/>
    <property type="match status" value="1"/>
</dbReference>
<organismHost>
    <name type="scientific">Macrobrachium rosenbergii</name>
    <name type="common">Giant fresh water prawn</name>
    <dbReference type="NCBI Taxonomy" id="79674"/>
</organismHost>